<gene>
    <name evidence="1" type="primary">rpoC2</name>
</gene>
<name>RPOC2_SACOF</name>
<comment type="function">
    <text evidence="1">DNA-dependent RNA polymerase catalyzes the transcription of DNA into RNA using the four ribonucleoside triphosphates as substrates.</text>
</comment>
<comment type="catalytic activity">
    <reaction evidence="1">
        <text>RNA(n) + a ribonucleoside 5'-triphosphate = RNA(n+1) + diphosphate</text>
        <dbReference type="Rhea" id="RHEA:21248"/>
        <dbReference type="Rhea" id="RHEA-COMP:14527"/>
        <dbReference type="Rhea" id="RHEA-COMP:17342"/>
        <dbReference type="ChEBI" id="CHEBI:33019"/>
        <dbReference type="ChEBI" id="CHEBI:61557"/>
        <dbReference type="ChEBI" id="CHEBI:140395"/>
        <dbReference type="EC" id="2.7.7.6"/>
    </reaction>
</comment>
<comment type="cofactor">
    <cofactor evidence="1">
        <name>Zn(2+)</name>
        <dbReference type="ChEBI" id="CHEBI:29105"/>
    </cofactor>
    <text evidence="1">Binds 1 Zn(2+) ion per subunit.</text>
</comment>
<comment type="subunit">
    <text evidence="1">In plastids the minimal PEP RNA polymerase catalytic core is composed of four subunits: alpha, beta, beta', and beta''. When a (nuclear-encoded) sigma factor is associated with the core the holoenzyme is formed, which can initiate transcription.</text>
</comment>
<comment type="subcellular location">
    <subcellularLocation>
        <location evidence="1">Plastid</location>
        <location evidence="1">Chloroplast</location>
    </subcellularLocation>
</comment>
<comment type="similarity">
    <text evidence="1">Belongs to the RNA polymerase beta' chain family. RpoC2 subfamily.</text>
</comment>
<protein>
    <recommendedName>
        <fullName evidence="1">DNA-directed RNA polymerase subunit beta''</fullName>
        <ecNumber evidence="1">2.7.7.6</ecNumber>
    </recommendedName>
    <alternativeName>
        <fullName evidence="1">PEP</fullName>
    </alternativeName>
    <alternativeName>
        <fullName evidence="1">Plastid-encoded RNA polymerase subunit beta''</fullName>
        <shortName evidence="1">RNA polymerase subunit beta''</shortName>
    </alternativeName>
</protein>
<accession>Q6ENX1</accession>
<keyword id="KW-0150">Chloroplast</keyword>
<keyword id="KW-0240">DNA-directed RNA polymerase</keyword>
<keyword id="KW-0479">Metal-binding</keyword>
<keyword id="KW-0548">Nucleotidyltransferase</keyword>
<keyword id="KW-0934">Plastid</keyword>
<keyword id="KW-0804">Transcription</keyword>
<keyword id="KW-0808">Transferase</keyword>
<keyword id="KW-0862">Zinc</keyword>
<reference key="1">
    <citation type="journal article" date="2004" name="DNA Res.">
        <title>Complete nucleotide sequence of the sugarcane (Saccharum officinarum) chloroplast genome: a comparative analysis of four monocot chloroplast genomes.</title>
        <authorList>
            <person name="Asano T."/>
            <person name="Tsudzuki T."/>
            <person name="Takahashi S."/>
            <person name="Shimada H."/>
            <person name="Kadowaki K."/>
        </authorList>
    </citation>
    <scope>NUCLEOTIDE SEQUENCE [LARGE SCALE GENOMIC DNA]</scope>
</reference>
<sequence>MAERANLVFHNKEIDGTAIKRLISRLIDHFGMGYTSHILDQIKTLGFHQATTTSISLGIEDLLTIPSKGWLVQDAEQQSFLLEKHYYYGAVHAVEKLRQSVEIWYATSEYLKQEMNSNFRITDPSNPVYLMSFSGARGNASQVHQLVGMRGLMADPQGQMIDLPIQSNLREGLSLTEYIISCYGARKGVVDTAVRTADAGYLTRRLVEVVQHIIVRRRDCGTIQGISVSPQNGMTEKLFVQTLIGRVLADDIYIGSRCIASRNQDIGIGLVNRFITAFRAQPFRAQPIYIRTPFTCRSTSWICQLCYGRSPTHGDLVELGEAVGIIAGQSIGEPGTQLTLRTFHTGGVFTGGTADLIRSPSNGKIQFNEDLVHPTRTRHGQPAFLCYIDLHVTIQSQDILHSVNIPLKSLILVQNDQYVESEQVIAEIRAGMSTLHFKEKVQKHIYSESDGEMHWSTDVYHAPEYQYGNLRRLPKTSHLWILSVSMCRSSIASFSLHKDQDQMNTYSFSVDGRYIFDFSMANDQVSHRLLDTFGKKDREILDYLTPDRIVSNGHWNCFYPSILQDNSDLLAKKRRNRFVVPLQYHQEQEKERISCLGISMEIPFMGVLRRNTIFAYFDDPRYRKDKRGSGIVKFRYRTLEEEYRTQEEEYRTREEEYRTREEEYRTREEDSEDEYESPENKYRTREGEGEYEILEDEYRTLEDEYETLEDEYGILEDEYRTLEKDSEEEYGSLENKYRTREGEGEYEILEEDSEEEYGSSEDGSEKEYGTLEEDSEEDSEEDSEDEYGSPEENSILKKEGFIEHRGTKEFSLKYQKEVDRFFFILQELHILPRSSSLKVLDNSIIGVDTQLTKNTRSRLGGLVRVKRKKSHTELKIFSGDIHFPEEADKILGGSLIPPEREKKDSKESKKRKNWVYVQRKKILKSKEKYFVSVRPAVAYEMDEGRNLATLFPQDLLQEEDNLQLRLVNFISHENSKLTQRIYHTNSQFVRTCLVVNWEQEEKEGARASLVEVRTNDLIRDFLRIELVKSTISYTRRRYDRTSVGLIPNNRLDRNNTNSFYSKAKIQSLSQHQEVIGTLLNRNKEYPSLMILLASNCSRIGLFKNSKYPNAVKESNPRIPIRDIFGLLGVIVPSISNFSSSYYLLTHNQILLKKYLFLDNLKQTFQVLQGLKYSLIDENKRISNFDSNIMLEPFHLNWHFLHHDSWEETLAIIHLGQFICENLCLFKSHIKKSGQIFIVNMDSFVLRAAKPYLATIGATVHGHYGKILYKGDRLVTFIYEKSRSSDITQGLPKVEQIFEARSIDSLSPNLERRIEDWNERIPRILGVPWGFLIGAELTIAQSRISLVNKIQKVYRSQGVQIHNRHIEIIIRQVTSKVRVSEDGMSNVFLPGELIGLLRAERAGRALDESIYYRAILLGITRASLNTQSFISEASFQETARVLAKAALRGRIDWLKGLKENVVLGGIIPVGTGFQKFVHRSPQDKNLYFEIQKKNLFASEMRDILFLHTELVSSDSDVTNNFYETSETPFTPIYTI</sequence>
<organism>
    <name type="scientific">Saccharum officinarum</name>
    <name type="common">Sugarcane</name>
    <dbReference type="NCBI Taxonomy" id="4547"/>
    <lineage>
        <taxon>Eukaryota</taxon>
        <taxon>Viridiplantae</taxon>
        <taxon>Streptophyta</taxon>
        <taxon>Embryophyta</taxon>
        <taxon>Tracheophyta</taxon>
        <taxon>Spermatophyta</taxon>
        <taxon>Magnoliopsida</taxon>
        <taxon>Liliopsida</taxon>
        <taxon>Poales</taxon>
        <taxon>Poaceae</taxon>
        <taxon>PACMAD clade</taxon>
        <taxon>Panicoideae</taxon>
        <taxon>Andropogonodae</taxon>
        <taxon>Andropogoneae</taxon>
        <taxon>Saccharinae</taxon>
        <taxon>Saccharum</taxon>
        <taxon>Saccharum officinarum species complex</taxon>
    </lineage>
</organism>
<evidence type="ECO:0000255" key="1">
    <source>
        <dbReference type="HAMAP-Rule" id="MF_01324"/>
    </source>
</evidence>
<evidence type="ECO:0000256" key="2">
    <source>
        <dbReference type="SAM" id="MobiDB-lite"/>
    </source>
</evidence>
<geneLocation type="chloroplast"/>
<proteinExistence type="inferred from homology"/>
<dbReference type="EC" id="2.7.7.6" evidence="1"/>
<dbReference type="EMBL" id="AP006714">
    <property type="protein sequence ID" value="BAD27285.1"/>
    <property type="molecule type" value="Genomic_DNA"/>
</dbReference>
<dbReference type="RefSeq" id="YP_009389563.1">
    <property type="nucleotide sequence ID" value="NC_035224.1"/>
</dbReference>
<dbReference type="SMR" id="Q6ENX1"/>
<dbReference type="GeneID" id="33347840"/>
<dbReference type="GO" id="GO:0009507">
    <property type="term" value="C:chloroplast"/>
    <property type="evidence" value="ECO:0007669"/>
    <property type="project" value="UniProtKB-SubCell"/>
</dbReference>
<dbReference type="GO" id="GO:0000428">
    <property type="term" value="C:DNA-directed RNA polymerase complex"/>
    <property type="evidence" value="ECO:0007669"/>
    <property type="project" value="UniProtKB-KW"/>
</dbReference>
<dbReference type="GO" id="GO:0005739">
    <property type="term" value="C:mitochondrion"/>
    <property type="evidence" value="ECO:0007669"/>
    <property type="project" value="GOC"/>
</dbReference>
<dbReference type="GO" id="GO:0003677">
    <property type="term" value="F:DNA binding"/>
    <property type="evidence" value="ECO:0007669"/>
    <property type="project" value="UniProtKB-UniRule"/>
</dbReference>
<dbReference type="GO" id="GO:0003899">
    <property type="term" value="F:DNA-directed RNA polymerase activity"/>
    <property type="evidence" value="ECO:0007669"/>
    <property type="project" value="UniProtKB-UniRule"/>
</dbReference>
<dbReference type="GO" id="GO:0008270">
    <property type="term" value="F:zinc ion binding"/>
    <property type="evidence" value="ECO:0007669"/>
    <property type="project" value="UniProtKB-UniRule"/>
</dbReference>
<dbReference type="GO" id="GO:0006351">
    <property type="term" value="P:DNA-templated transcription"/>
    <property type="evidence" value="ECO:0007669"/>
    <property type="project" value="UniProtKB-UniRule"/>
</dbReference>
<dbReference type="CDD" id="cd02655">
    <property type="entry name" value="RNAP_beta'_C"/>
    <property type="match status" value="1"/>
</dbReference>
<dbReference type="FunFam" id="1.10.132.30:FF:000002">
    <property type="entry name" value="DNA-directed RNA polymerase subunit beta"/>
    <property type="match status" value="1"/>
</dbReference>
<dbReference type="Gene3D" id="1.10.132.30">
    <property type="match status" value="1"/>
</dbReference>
<dbReference type="Gene3D" id="1.10.150.390">
    <property type="match status" value="1"/>
</dbReference>
<dbReference type="Gene3D" id="1.10.1790.20">
    <property type="match status" value="1"/>
</dbReference>
<dbReference type="Gene3D" id="1.10.274.100">
    <property type="entry name" value="RNA polymerase Rpb1, domain 3"/>
    <property type="match status" value="1"/>
</dbReference>
<dbReference type="HAMAP" id="MF_01324">
    <property type="entry name" value="RNApol_bact_RpoC2"/>
    <property type="match status" value="1"/>
</dbReference>
<dbReference type="InterPro" id="IPR012756">
    <property type="entry name" value="DNA-dir_RpoC2_beta_pp"/>
</dbReference>
<dbReference type="InterPro" id="IPR050254">
    <property type="entry name" value="RNA_pol_beta''_euk"/>
</dbReference>
<dbReference type="InterPro" id="IPR042102">
    <property type="entry name" value="RNA_pol_Rpb1_3_sf"/>
</dbReference>
<dbReference type="InterPro" id="IPR007083">
    <property type="entry name" value="RNA_pol_Rpb1_4"/>
</dbReference>
<dbReference type="InterPro" id="IPR007081">
    <property type="entry name" value="RNA_pol_Rpb1_5"/>
</dbReference>
<dbReference type="InterPro" id="IPR038120">
    <property type="entry name" value="Rpb1_funnel_sf"/>
</dbReference>
<dbReference type="NCBIfam" id="TIGR02388">
    <property type="entry name" value="rpoC2_cyan"/>
    <property type="match status" value="1"/>
</dbReference>
<dbReference type="PANTHER" id="PTHR34995">
    <property type="entry name" value="DNA-DIRECTED RNA POLYMERASE SUBUNIT BETA"/>
    <property type="match status" value="1"/>
</dbReference>
<dbReference type="PANTHER" id="PTHR34995:SF1">
    <property type="entry name" value="DNA-DIRECTED RNA POLYMERASE SUBUNIT BETA"/>
    <property type="match status" value="1"/>
</dbReference>
<dbReference type="Pfam" id="PF05000">
    <property type="entry name" value="RNA_pol_Rpb1_4"/>
    <property type="match status" value="1"/>
</dbReference>
<dbReference type="Pfam" id="PF04998">
    <property type="entry name" value="RNA_pol_Rpb1_5"/>
    <property type="match status" value="2"/>
</dbReference>
<dbReference type="SUPFAM" id="SSF64484">
    <property type="entry name" value="beta and beta-prime subunits of DNA dependent RNA-polymerase"/>
    <property type="match status" value="1"/>
</dbReference>
<feature type="chain" id="PRO_0000067946" description="DNA-directed RNA polymerase subunit beta''">
    <location>
        <begin position="1"/>
        <end position="1534"/>
    </location>
</feature>
<feature type="region of interest" description="Disordered" evidence="2">
    <location>
        <begin position="644"/>
        <end position="698"/>
    </location>
</feature>
<feature type="region of interest" description="Disordered" evidence="2">
    <location>
        <begin position="719"/>
        <end position="800"/>
    </location>
</feature>
<feature type="compositionally biased region" description="Basic and acidic residues" evidence="2">
    <location>
        <begin position="644"/>
        <end position="668"/>
    </location>
</feature>
<feature type="compositionally biased region" description="Basic and acidic residues" evidence="2">
    <location>
        <begin position="678"/>
        <end position="688"/>
    </location>
</feature>
<feature type="compositionally biased region" description="Acidic residues" evidence="2">
    <location>
        <begin position="744"/>
        <end position="762"/>
    </location>
</feature>
<feature type="compositionally biased region" description="Acidic residues" evidence="2">
    <location>
        <begin position="770"/>
        <end position="789"/>
    </location>
</feature>
<feature type="binding site" evidence="1">
    <location>
        <position position="220"/>
    </location>
    <ligand>
        <name>Zn(2+)</name>
        <dbReference type="ChEBI" id="CHEBI:29105"/>
    </ligand>
</feature>
<feature type="binding site" evidence="1">
    <location>
        <position position="296"/>
    </location>
    <ligand>
        <name>Zn(2+)</name>
        <dbReference type="ChEBI" id="CHEBI:29105"/>
    </ligand>
</feature>
<feature type="binding site" evidence="1">
    <location>
        <position position="303"/>
    </location>
    <ligand>
        <name>Zn(2+)</name>
        <dbReference type="ChEBI" id="CHEBI:29105"/>
    </ligand>
</feature>
<feature type="binding site" evidence="1">
    <location>
        <position position="306"/>
    </location>
    <ligand>
        <name>Zn(2+)</name>
        <dbReference type="ChEBI" id="CHEBI:29105"/>
    </ligand>
</feature>